<reference key="1">
    <citation type="journal article" date="2005" name="Nature">
        <title>The genome of the social amoeba Dictyostelium discoideum.</title>
        <authorList>
            <person name="Eichinger L."/>
            <person name="Pachebat J.A."/>
            <person name="Gloeckner G."/>
            <person name="Rajandream M.A."/>
            <person name="Sucgang R."/>
            <person name="Berriman M."/>
            <person name="Song J."/>
            <person name="Olsen R."/>
            <person name="Szafranski K."/>
            <person name="Xu Q."/>
            <person name="Tunggal B."/>
            <person name="Kummerfeld S."/>
            <person name="Madera M."/>
            <person name="Konfortov B.A."/>
            <person name="Rivero F."/>
            <person name="Bankier A.T."/>
            <person name="Lehmann R."/>
            <person name="Hamlin N."/>
            <person name="Davies R."/>
            <person name="Gaudet P."/>
            <person name="Fey P."/>
            <person name="Pilcher K."/>
            <person name="Chen G."/>
            <person name="Saunders D."/>
            <person name="Sodergren E.J."/>
            <person name="Davis P."/>
            <person name="Kerhornou A."/>
            <person name="Nie X."/>
            <person name="Hall N."/>
            <person name="Anjard C."/>
            <person name="Hemphill L."/>
            <person name="Bason N."/>
            <person name="Farbrother P."/>
            <person name="Desany B."/>
            <person name="Just E."/>
            <person name="Morio T."/>
            <person name="Rost R."/>
            <person name="Churcher C.M."/>
            <person name="Cooper J."/>
            <person name="Haydock S."/>
            <person name="van Driessche N."/>
            <person name="Cronin A."/>
            <person name="Goodhead I."/>
            <person name="Muzny D.M."/>
            <person name="Mourier T."/>
            <person name="Pain A."/>
            <person name="Lu M."/>
            <person name="Harper D."/>
            <person name="Lindsay R."/>
            <person name="Hauser H."/>
            <person name="James K.D."/>
            <person name="Quiles M."/>
            <person name="Madan Babu M."/>
            <person name="Saito T."/>
            <person name="Buchrieser C."/>
            <person name="Wardroper A."/>
            <person name="Felder M."/>
            <person name="Thangavelu M."/>
            <person name="Johnson D."/>
            <person name="Knights A."/>
            <person name="Loulseged H."/>
            <person name="Mungall K.L."/>
            <person name="Oliver K."/>
            <person name="Price C."/>
            <person name="Quail M.A."/>
            <person name="Urushihara H."/>
            <person name="Hernandez J."/>
            <person name="Rabbinowitsch E."/>
            <person name="Steffen D."/>
            <person name="Sanders M."/>
            <person name="Ma J."/>
            <person name="Kohara Y."/>
            <person name="Sharp S."/>
            <person name="Simmonds M.N."/>
            <person name="Spiegler S."/>
            <person name="Tivey A."/>
            <person name="Sugano S."/>
            <person name="White B."/>
            <person name="Walker D."/>
            <person name="Woodward J.R."/>
            <person name="Winckler T."/>
            <person name="Tanaka Y."/>
            <person name="Shaulsky G."/>
            <person name="Schleicher M."/>
            <person name="Weinstock G.M."/>
            <person name="Rosenthal A."/>
            <person name="Cox E.C."/>
            <person name="Chisholm R.L."/>
            <person name="Gibbs R.A."/>
            <person name="Loomis W.F."/>
            <person name="Platzer M."/>
            <person name="Kay R.R."/>
            <person name="Williams J.G."/>
            <person name="Dear P.H."/>
            <person name="Noegel A.A."/>
            <person name="Barrell B.G."/>
            <person name="Kuspa A."/>
        </authorList>
    </citation>
    <scope>NUCLEOTIDE SEQUENCE [LARGE SCALE GENOMIC DNA]</scope>
    <source>
        <strain>AX4</strain>
    </source>
</reference>
<proteinExistence type="inferred from homology"/>
<protein>
    <recommendedName>
        <fullName evidence="1">NAD(P)H-hydrate epimerase</fullName>
        <ecNumber>5.1.99.6</ecNumber>
    </recommendedName>
    <alternativeName>
        <fullName evidence="1">NAD(P)HX epimerase</fullName>
    </alternativeName>
</protein>
<accession>Q55CV0</accession>
<keyword id="KW-0413">Isomerase</keyword>
<keyword id="KW-0479">Metal-binding</keyword>
<keyword id="KW-0520">NAD</keyword>
<keyword id="KW-0521">NADP</keyword>
<keyword id="KW-0547">Nucleotide-binding</keyword>
<keyword id="KW-0630">Potassium</keyword>
<keyword id="KW-1185">Reference proteome</keyword>
<dbReference type="EC" id="5.1.99.6"/>
<dbReference type="EMBL" id="AAFI02000005">
    <property type="protein sequence ID" value="EAL72295.1"/>
    <property type="molecule type" value="Genomic_DNA"/>
</dbReference>
<dbReference type="RefSeq" id="XP_646381.1">
    <property type="nucleotide sequence ID" value="XM_641289.1"/>
</dbReference>
<dbReference type="SMR" id="Q55CV0"/>
<dbReference type="FunCoup" id="Q55CV0">
    <property type="interactions" value="438"/>
</dbReference>
<dbReference type="STRING" id="44689.Q55CV0"/>
<dbReference type="PaxDb" id="44689-DDB0190649"/>
<dbReference type="EnsemblProtists" id="EAL72295">
    <property type="protein sequence ID" value="EAL72295"/>
    <property type="gene ID" value="DDB_G0269890"/>
</dbReference>
<dbReference type="GeneID" id="8617336"/>
<dbReference type="KEGG" id="ddi:DDB_G0269890"/>
<dbReference type="dictyBase" id="DDB_G0269890"/>
<dbReference type="VEuPathDB" id="AmoebaDB:DDB_G0269890"/>
<dbReference type="eggNOG" id="KOG2585">
    <property type="taxonomic scope" value="Eukaryota"/>
</dbReference>
<dbReference type="HOGENOM" id="CLU_024853_3_1_1"/>
<dbReference type="InParanoid" id="Q55CV0"/>
<dbReference type="OMA" id="RHLFHYG"/>
<dbReference type="PhylomeDB" id="Q55CV0"/>
<dbReference type="Reactome" id="R-DDI-197264">
    <property type="pathway name" value="Nicotinamide salvaging"/>
</dbReference>
<dbReference type="PRO" id="PR:Q55CV0"/>
<dbReference type="Proteomes" id="UP000002195">
    <property type="component" value="Chromosome 1"/>
</dbReference>
<dbReference type="GO" id="GO:0005739">
    <property type="term" value="C:mitochondrion"/>
    <property type="evidence" value="ECO:0000318"/>
    <property type="project" value="GO_Central"/>
</dbReference>
<dbReference type="GO" id="GO:0046872">
    <property type="term" value="F:metal ion binding"/>
    <property type="evidence" value="ECO:0007669"/>
    <property type="project" value="UniProtKB-KW"/>
</dbReference>
<dbReference type="GO" id="GO:0052856">
    <property type="term" value="F:NAD(P)HX epimerase activity"/>
    <property type="evidence" value="ECO:0000318"/>
    <property type="project" value="GO_Central"/>
</dbReference>
<dbReference type="GO" id="GO:0000166">
    <property type="term" value="F:nucleotide binding"/>
    <property type="evidence" value="ECO:0007669"/>
    <property type="project" value="UniProtKB-KW"/>
</dbReference>
<dbReference type="Gene3D" id="3.40.50.10260">
    <property type="entry name" value="YjeF N-terminal domain"/>
    <property type="match status" value="1"/>
</dbReference>
<dbReference type="HAMAP" id="MF_01966">
    <property type="entry name" value="NADHX_epimerase"/>
    <property type="match status" value="1"/>
</dbReference>
<dbReference type="InterPro" id="IPR004443">
    <property type="entry name" value="YjeF_N_dom"/>
</dbReference>
<dbReference type="InterPro" id="IPR036652">
    <property type="entry name" value="YjeF_N_dom_sf"/>
</dbReference>
<dbReference type="InterPro" id="IPR032976">
    <property type="entry name" value="YJEFN_prot_NAXE-like"/>
</dbReference>
<dbReference type="NCBIfam" id="TIGR00197">
    <property type="entry name" value="yjeF_nterm"/>
    <property type="match status" value="1"/>
</dbReference>
<dbReference type="PANTHER" id="PTHR13232">
    <property type="entry name" value="NAD(P)H-HYDRATE EPIMERASE"/>
    <property type="match status" value="1"/>
</dbReference>
<dbReference type="PANTHER" id="PTHR13232:SF10">
    <property type="entry name" value="NAD(P)H-HYDRATE EPIMERASE"/>
    <property type="match status" value="1"/>
</dbReference>
<dbReference type="Pfam" id="PF03853">
    <property type="entry name" value="YjeF_N"/>
    <property type="match status" value="1"/>
</dbReference>
<dbReference type="SUPFAM" id="SSF64153">
    <property type="entry name" value="YjeF N-terminal domain-like"/>
    <property type="match status" value="1"/>
</dbReference>
<dbReference type="PROSITE" id="PS51385">
    <property type="entry name" value="YJEF_N"/>
    <property type="match status" value="1"/>
</dbReference>
<comment type="function">
    <text evidence="1">Catalyzes the epimerization of the S- and R-forms of NAD(P)HX, a damaged form of NAD(P)H that is a result of enzymatic or heat-dependent hydration. This is a prerequisite for the S-specific NAD(P)H-hydrate dehydratase to allow the repair of both epimers of NAD(P)HX.</text>
</comment>
<comment type="catalytic activity">
    <reaction>
        <text>(6R)-NADHX = (6S)-NADHX</text>
        <dbReference type="Rhea" id="RHEA:32215"/>
        <dbReference type="ChEBI" id="CHEBI:64074"/>
        <dbReference type="ChEBI" id="CHEBI:64075"/>
        <dbReference type="EC" id="5.1.99.6"/>
    </reaction>
</comment>
<comment type="catalytic activity">
    <reaction>
        <text>(6R)-NADPHX = (6S)-NADPHX</text>
        <dbReference type="Rhea" id="RHEA:32227"/>
        <dbReference type="ChEBI" id="CHEBI:64076"/>
        <dbReference type="ChEBI" id="CHEBI:64077"/>
        <dbReference type="EC" id="5.1.99.6"/>
    </reaction>
</comment>
<comment type="cofactor">
    <cofactor evidence="1">
        <name>K(+)</name>
        <dbReference type="ChEBI" id="CHEBI:29103"/>
    </cofactor>
    <text evidence="1">Binds 1 potassium ion per subunit.</text>
</comment>
<comment type="similarity">
    <text evidence="1">Belongs to the NnrE/AIBP family.</text>
</comment>
<name>NNRE_DICDI</name>
<sequence>MNAIKFLTQNEAIVMDQLLMGKKYAFSTDSLMELAGLSCASVIQHVYPTISKKVLTICGPGNNGGDGLVASRHLVQFGYDVNIYYPKRTDKELYHNLVTQCKHEGIEFLESMPTNDQLNNDYGLVIDSIFGYSFKGDIRSPFDTIIKDSLNNIKTPIASIDMPSGWDVENGNIKNLFTPDLLISLAAPKLGSKSFKGKHYLGGRFLPKEFLKETNLTIPKFNGSNQFVDITNYQN</sequence>
<feature type="chain" id="PRO_0000416322" description="NAD(P)H-hydrate epimerase">
    <location>
        <begin position="1"/>
        <end position="235"/>
    </location>
</feature>
<feature type="domain" description="YjeF N-terminal" evidence="1">
    <location>
        <begin position="12"/>
        <end position="218"/>
    </location>
</feature>
<feature type="binding site" evidence="1">
    <location>
        <begin position="62"/>
        <end position="66"/>
    </location>
    <ligand>
        <name>(6S)-NADPHX</name>
        <dbReference type="ChEBI" id="CHEBI:64076"/>
    </ligand>
</feature>
<feature type="binding site" evidence="1">
    <location>
        <position position="63"/>
    </location>
    <ligand>
        <name>K(+)</name>
        <dbReference type="ChEBI" id="CHEBI:29103"/>
    </ligand>
</feature>
<feature type="binding site" evidence="1">
    <location>
        <position position="127"/>
    </location>
    <ligand>
        <name>K(+)</name>
        <dbReference type="ChEBI" id="CHEBI:29103"/>
    </ligand>
</feature>
<feature type="binding site" evidence="1">
    <location>
        <begin position="131"/>
        <end position="137"/>
    </location>
    <ligand>
        <name>(6S)-NADPHX</name>
        <dbReference type="ChEBI" id="CHEBI:64076"/>
    </ligand>
</feature>
<feature type="binding site" evidence="1">
    <location>
        <position position="161"/>
    </location>
    <ligand>
        <name>(6S)-NADPHX</name>
        <dbReference type="ChEBI" id="CHEBI:64076"/>
    </ligand>
</feature>
<feature type="binding site" evidence="1">
    <location>
        <position position="164"/>
    </location>
    <ligand>
        <name>K(+)</name>
        <dbReference type="ChEBI" id="CHEBI:29103"/>
    </ligand>
</feature>
<organism>
    <name type="scientific">Dictyostelium discoideum</name>
    <name type="common">Social amoeba</name>
    <dbReference type="NCBI Taxonomy" id="44689"/>
    <lineage>
        <taxon>Eukaryota</taxon>
        <taxon>Amoebozoa</taxon>
        <taxon>Evosea</taxon>
        <taxon>Eumycetozoa</taxon>
        <taxon>Dictyostelia</taxon>
        <taxon>Dictyosteliales</taxon>
        <taxon>Dictyosteliaceae</taxon>
        <taxon>Dictyostelium</taxon>
    </lineage>
</organism>
<gene>
    <name type="ORF">DDB_G0269890</name>
</gene>
<evidence type="ECO:0000255" key="1">
    <source>
        <dbReference type="HAMAP-Rule" id="MF_03159"/>
    </source>
</evidence>